<gene>
    <name evidence="7" type="primary">ITFG1</name>
    <name evidence="5" type="synonym">LNKN-1</name>
    <name evidence="7" type="synonym">TIP</name>
    <name type="ORF">CDA08</name>
</gene>
<comment type="function">
    <text evidence="1">Modulator of T-cell function. Has a protective effect in graft versus host disease model (By similarity).</text>
</comment>
<comment type="subunit">
    <text evidence="4">Interacts with RUVBL1, RUVBL2 and alpha-tubulin.</text>
</comment>
<comment type="subcellular location">
    <subcellularLocation>
        <location evidence="6">Secreted</location>
    </subcellularLocation>
    <subcellularLocation>
        <location evidence="6">Membrane</location>
        <topology evidence="6">Single-pass type I membrane protein</topology>
    </subcellularLocation>
</comment>
<comment type="tissue specificity">
    <text>Ubiquitously expressed.</text>
</comment>
<comment type="similarity">
    <text evidence="6">Belongs to the TIP family.</text>
</comment>
<comment type="sequence caution" evidence="6">
    <conflict type="frameshift">
        <sequence resource="EMBL-CDS" id="AAG41782"/>
    </conflict>
</comment>
<reference key="1">
    <citation type="journal article" date="2003" name="Nat. Biotechnol.">
        <title>TIP, a T-cell factor identified using high-throughput screening increases survival in a graft-versus-host disease model.</title>
        <authorList>
            <person name="Fiscella M."/>
            <person name="Perry J.W."/>
            <person name="Teng B."/>
            <person name="Bloom M."/>
            <person name="Zhang C."/>
            <person name="Leung K."/>
            <person name="Pukac L."/>
            <person name="Florence K."/>
            <person name="Concepcion A."/>
            <person name="Liu B."/>
            <person name="Meng Y."/>
            <person name="Chen C."/>
            <person name="Elgin E.C."/>
            <person name="Kanakaraj P."/>
            <person name="Kaufmann T.E."/>
            <person name="Porter J."/>
            <person name="Cibotti R."/>
            <person name="Mei Y."/>
            <person name="Zhou J."/>
            <person name="Chen G."/>
            <person name="Roschke V."/>
            <person name="Komatsoulis G."/>
            <person name="Mansfield B."/>
            <person name="Ruben S."/>
            <person name="Sanyal I."/>
            <person name="Migone T.-S."/>
        </authorList>
    </citation>
    <scope>NUCLEOTIDE SEQUENCE [MRNA]</scope>
    <scope>SUBCELLULAR LOCATION</scope>
</reference>
<reference key="2">
    <citation type="submission" date="1999-12" db="EMBL/GenBank/DDBJ databases">
        <title>A novel gene expressed in human pheochromocytoma.</title>
        <authorList>
            <person name="Li Y."/>
            <person name="Huang Q."/>
            <person name="Peng Y."/>
            <person name="Song H."/>
            <person name="Yu Y."/>
            <person name="Xu S."/>
            <person name="Ren S."/>
            <person name="Chen Z."/>
            <person name="Han Z."/>
        </authorList>
    </citation>
    <scope>NUCLEOTIDE SEQUENCE [LARGE SCALE MRNA]</scope>
    <source>
        <tissue>Pheochromocytoma</tissue>
    </source>
</reference>
<reference key="3">
    <citation type="journal article" date="2004" name="Nat. Genet.">
        <title>Complete sequencing and characterization of 21,243 full-length human cDNAs.</title>
        <authorList>
            <person name="Ota T."/>
            <person name="Suzuki Y."/>
            <person name="Nishikawa T."/>
            <person name="Otsuki T."/>
            <person name="Sugiyama T."/>
            <person name="Irie R."/>
            <person name="Wakamatsu A."/>
            <person name="Hayashi K."/>
            <person name="Sato H."/>
            <person name="Nagai K."/>
            <person name="Kimura K."/>
            <person name="Makita H."/>
            <person name="Sekine M."/>
            <person name="Obayashi M."/>
            <person name="Nishi T."/>
            <person name="Shibahara T."/>
            <person name="Tanaka T."/>
            <person name="Ishii S."/>
            <person name="Yamamoto J."/>
            <person name="Saito K."/>
            <person name="Kawai Y."/>
            <person name="Isono Y."/>
            <person name="Nakamura Y."/>
            <person name="Nagahari K."/>
            <person name="Murakami K."/>
            <person name="Yasuda T."/>
            <person name="Iwayanagi T."/>
            <person name="Wagatsuma M."/>
            <person name="Shiratori A."/>
            <person name="Sudo H."/>
            <person name="Hosoiri T."/>
            <person name="Kaku Y."/>
            <person name="Kodaira H."/>
            <person name="Kondo H."/>
            <person name="Sugawara M."/>
            <person name="Takahashi M."/>
            <person name="Kanda K."/>
            <person name="Yokoi T."/>
            <person name="Furuya T."/>
            <person name="Kikkawa E."/>
            <person name="Omura Y."/>
            <person name="Abe K."/>
            <person name="Kamihara K."/>
            <person name="Katsuta N."/>
            <person name="Sato K."/>
            <person name="Tanikawa M."/>
            <person name="Yamazaki M."/>
            <person name="Ninomiya K."/>
            <person name="Ishibashi T."/>
            <person name="Yamashita H."/>
            <person name="Murakawa K."/>
            <person name="Fujimori K."/>
            <person name="Tanai H."/>
            <person name="Kimata M."/>
            <person name="Watanabe M."/>
            <person name="Hiraoka S."/>
            <person name="Chiba Y."/>
            <person name="Ishida S."/>
            <person name="Ono Y."/>
            <person name="Takiguchi S."/>
            <person name="Watanabe S."/>
            <person name="Yosida M."/>
            <person name="Hotuta T."/>
            <person name="Kusano J."/>
            <person name="Kanehori K."/>
            <person name="Takahashi-Fujii A."/>
            <person name="Hara H."/>
            <person name="Tanase T.-O."/>
            <person name="Nomura Y."/>
            <person name="Togiya S."/>
            <person name="Komai F."/>
            <person name="Hara R."/>
            <person name="Takeuchi K."/>
            <person name="Arita M."/>
            <person name="Imose N."/>
            <person name="Musashino K."/>
            <person name="Yuuki H."/>
            <person name="Oshima A."/>
            <person name="Sasaki N."/>
            <person name="Aotsuka S."/>
            <person name="Yoshikawa Y."/>
            <person name="Matsunawa H."/>
            <person name="Ichihara T."/>
            <person name="Shiohata N."/>
            <person name="Sano S."/>
            <person name="Moriya S."/>
            <person name="Momiyama H."/>
            <person name="Satoh N."/>
            <person name="Takami S."/>
            <person name="Terashima Y."/>
            <person name="Suzuki O."/>
            <person name="Nakagawa S."/>
            <person name="Senoh A."/>
            <person name="Mizoguchi H."/>
            <person name="Goto Y."/>
            <person name="Shimizu F."/>
            <person name="Wakebe H."/>
            <person name="Hishigaki H."/>
            <person name="Watanabe T."/>
            <person name="Sugiyama A."/>
            <person name="Takemoto M."/>
            <person name="Kawakami B."/>
            <person name="Yamazaki M."/>
            <person name="Watanabe K."/>
            <person name="Kumagai A."/>
            <person name="Itakura S."/>
            <person name="Fukuzumi Y."/>
            <person name="Fujimori Y."/>
            <person name="Komiyama M."/>
            <person name="Tashiro H."/>
            <person name="Tanigami A."/>
            <person name="Fujiwara T."/>
            <person name="Ono T."/>
            <person name="Yamada K."/>
            <person name="Fujii Y."/>
            <person name="Ozaki K."/>
            <person name="Hirao M."/>
            <person name="Ohmori Y."/>
            <person name="Kawabata A."/>
            <person name="Hikiji T."/>
            <person name="Kobatake N."/>
            <person name="Inagaki H."/>
            <person name="Ikema Y."/>
            <person name="Okamoto S."/>
            <person name="Okitani R."/>
            <person name="Kawakami T."/>
            <person name="Noguchi S."/>
            <person name="Itoh T."/>
            <person name="Shigeta K."/>
            <person name="Senba T."/>
            <person name="Matsumura K."/>
            <person name="Nakajima Y."/>
            <person name="Mizuno T."/>
            <person name="Morinaga M."/>
            <person name="Sasaki M."/>
            <person name="Togashi T."/>
            <person name="Oyama M."/>
            <person name="Hata H."/>
            <person name="Watanabe M."/>
            <person name="Komatsu T."/>
            <person name="Mizushima-Sugano J."/>
            <person name="Satoh T."/>
            <person name="Shirai Y."/>
            <person name="Takahashi Y."/>
            <person name="Nakagawa K."/>
            <person name="Okumura K."/>
            <person name="Nagase T."/>
            <person name="Nomura N."/>
            <person name="Kikuchi H."/>
            <person name="Masuho Y."/>
            <person name="Yamashita R."/>
            <person name="Nakai K."/>
            <person name="Yada T."/>
            <person name="Nakamura Y."/>
            <person name="Ohara O."/>
            <person name="Isogai T."/>
            <person name="Sugano S."/>
        </authorList>
    </citation>
    <scope>NUCLEOTIDE SEQUENCE [LARGE SCALE MRNA]</scope>
</reference>
<reference key="4">
    <citation type="journal article" date="2004" name="Genome Res.">
        <title>The status, quality, and expansion of the NIH full-length cDNA project: the Mammalian Gene Collection (MGC).</title>
        <authorList>
            <consortium name="The MGC Project Team"/>
        </authorList>
    </citation>
    <scope>NUCLEOTIDE SEQUENCE [LARGE SCALE MRNA]</scope>
    <source>
        <tissue>Muscle</tissue>
        <tissue>Skin</tissue>
    </source>
</reference>
<reference key="5">
    <citation type="journal article" date="2009" name="J. Proteome Res.">
        <title>Glycoproteomics analysis of human liver tissue by combination of multiple enzyme digestion and hydrazide chemistry.</title>
        <authorList>
            <person name="Chen R."/>
            <person name="Jiang X."/>
            <person name="Sun D."/>
            <person name="Han G."/>
            <person name="Wang F."/>
            <person name="Ye M."/>
            <person name="Wang L."/>
            <person name="Zou H."/>
        </authorList>
    </citation>
    <scope>GLYCOSYLATION [LARGE SCALE ANALYSIS] AT ASN-188</scope>
    <source>
        <tissue>Liver</tissue>
    </source>
</reference>
<reference key="6">
    <citation type="journal article" date="2014" name="Elife">
        <title>LINKIN, a new transmembrane protein necessary for cell adhesion.</title>
        <authorList>
            <person name="Kato M."/>
            <person name="Chou T.F."/>
            <person name="Yu C.Z."/>
            <person name="DeModena J."/>
            <person name="Sternberg P.W."/>
        </authorList>
    </citation>
    <scope>INTERACTION WITH RUVBL1; RUVBL2 AND ALPHA-TUBULIN</scope>
</reference>
<sequence>MAAAGRLPSSWALFSPLLAGLALLGVGPVPARALHNVTAELFGAEAWGTLAAFGDLNSDKQTDLFVLRERNDLIVFLADQNAPYFKPKVKVSFKNHSALITSVVPGDYDGDSQMDVLLTYLPKNYAKSELGAVIFWGQNQTLDPNNMTILNRTFQDEPLIMDFNGDLIPDIFGITNESNQPQILLGGNLSWHPALTTTSKMRIPHSHAFIDLTEDFTADLFLTTLNATTSTFQFEIWENLDGNFSVSTILEKPQNMMVVGQSAFADFDGDGHMDHLLPGCEDKNCQKSTIYLVRSGMKQWVPVLQDFSNKGTLWGFVPFVDEQQPTEIPIPITLHIGDYNMDGYPDALVILKNTSGSNQQAFLLENVPCNNASCEEARRMFKVYWELTDLNQIKDAMVATFFDIYEDGILDIVVLSKGYTKNDFAIHTLKNNFEADAYFVKVIVLSGLCSNDCPRKITPFGVNQPGPYIMYTTVDANGYLKNGSAGQLSQSAHLALQLPYNVLGLGRSANFLDHLYVGIPRPSGEKSIRKQEWTAIIPNSQLIVIPYPHNVPRSWSAKLYLTPSNIVLLTAIALIGVCVFILAIIGILHWQEKKADDREKRQEAHRFHFDAM</sequence>
<dbReference type="EMBL" id="AF503339">
    <property type="protein sequence ID" value="AAN31655.1"/>
    <property type="molecule type" value="mRNA"/>
</dbReference>
<dbReference type="EMBL" id="AF212247">
    <property type="protein sequence ID" value="AAG41782.1"/>
    <property type="status" value="ALT_FRAME"/>
    <property type="molecule type" value="mRNA"/>
</dbReference>
<dbReference type="EMBL" id="AK027596">
    <property type="protein sequence ID" value="BAB55220.1"/>
    <property type="molecule type" value="mRNA"/>
</dbReference>
<dbReference type="EMBL" id="BC006321">
    <property type="protein sequence ID" value="AAH06321.2"/>
    <property type="molecule type" value="mRNA"/>
</dbReference>
<dbReference type="EMBL" id="BC024162">
    <property type="protein sequence ID" value="AAH24162.1"/>
    <property type="molecule type" value="mRNA"/>
</dbReference>
<dbReference type="CCDS" id="CCDS10728.1"/>
<dbReference type="RefSeq" id="NP_001291931.1">
    <property type="nucleotide sequence ID" value="NM_001305002.1"/>
</dbReference>
<dbReference type="RefSeq" id="NP_110417.2">
    <property type="nucleotide sequence ID" value="NM_030790.4"/>
</dbReference>
<dbReference type="BioGRID" id="123507">
    <property type="interactions" value="586"/>
</dbReference>
<dbReference type="FunCoup" id="Q8TB96">
    <property type="interactions" value="882"/>
</dbReference>
<dbReference type="IntAct" id="Q8TB96">
    <property type="interactions" value="60"/>
</dbReference>
<dbReference type="MINT" id="Q8TB96"/>
<dbReference type="STRING" id="9606.ENSP00000319918"/>
<dbReference type="GlyConnect" id="1789">
    <property type="glycosylation" value="1 N-Linked glycan (1 site)"/>
</dbReference>
<dbReference type="GlyCosmos" id="Q8TB96">
    <property type="glycosylation" value="12 sites, 1 glycan"/>
</dbReference>
<dbReference type="GlyGen" id="Q8TB96">
    <property type="glycosylation" value="13 sites, 8 N-linked glycans (5 sites), 1 O-linked glycan (1 site)"/>
</dbReference>
<dbReference type="iPTMnet" id="Q8TB96"/>
<dbReference type="PhosphoSitePlus" id="Q8TB96"/>
<dbReference type="BioMuta" id="ITFG1"/>
<dbReference type="DMDM" id="45477238"/>
<dbReference type="jPOST" id="Q8TB96"/>
<dbReference type="MassIVE" id="Q8TB96"/>
<dbReference type="PaxDb" id="9606-ENSP00000319918"/>
<dbReference type="PeptideAtlas" id="Q8TB96"/>
<dbReference type="ProteomicsDB" id="73977"/>
<dbReference type="Pumba" id="Q8TB96"/>
<dbReference type="Antibodypedia" id="14372">
    <property type="antibodies" value="173 antibodies from 23 providers"/>
</dbReference>
<dbReference type="DNASU" id="81533"/>
<dbReference type="Ensembl" id="ENST00000320640.11">
    <property type="protein sequence ID" value="ENSP00000319918.6"/>
    <property type="gene ID" value="ENSG00000129636.13"/>
</dbReference>
<dbReference type="GeneID" id="81533"/>
<dbReference type="KEGG" id="hsa:81533"/>
<dbReference type="MANE-Select" id="ENST00000320640.11">
    <property type="protein sequence ID" value="ENSP00000319918.6"/>
    <property type="RefSeq nucleotide sequence ID" value="NM_030790.5"/>
    <property type="RefSeq protein sequence ID" value="NP_110417.2"/>
</dbReference>
<dbReference type="UCSC" id="uc002eet.4">
    <property type="organism name" value="human"/>
</dbReference>
<dbReference type="AGR" id="HGNC:30697"/>
<dbReference type="CTD" id="81533"/>
<dbReference type="DisGeNET" id="81533"/>
<dbReference type="GeneCards" id="ITFG1"/>
<dbReference type="HGNC" id="HGNC:30697">
    <property type="gene designation" value="ITFG1"/>
</dbReference>
<dbReference type="HPA" id="ENSG00000129636">
    <property type="expression patterns" value="Low tissue specificity"/>
</dbReference>
<dbReference type="MIM" id="611803">
    <property type="type" value="gene"/>
</dbReference>
<dbReference type="neXtProt" id="NX_Q8TB96"/>
<dbReference type="OpenTargets" id="ENSG00000129636"/>
<dbReference type="PharmGKB" id="PA143485506"/>
<dbReference type="VEuPathDB" id="HostDB:ENSG00000129636"/>
<dbReference type="eggNOG" id="KOG4550">
    <property type="taxonomic scope" value="Eukaryota"/>
</dbReference>
<dbReference type="GeneTree" id="ENSGT00390000013367"/>
<dbReference type="HOGENOM" id="CLU_020272_2_0_1"/>
<dbReference type="InParanoid" id="Q8TB96"/>
<dbReference type="OMA" id="PGDWIPW"/>
<dbReference type="OrthoDB" id="10250728at2759"/>
<dbReference type="PAN-GO" id="Q8TB96">
    <property type="GO annotations" value="1 GO annotation based on evolutionary models"/>
</dbReference>
<dbReference type="PhylomeDB" id="Q8TB96"/>
<dbReference type="TreeFam" id="TF105620"/>
<dbReference type="PathwayCommons" id="Q8TB96"/>
<dbReference type="SignaLink" id="Q8TB96"/>
<dbReference type="BioGRID-ORCS" id="81533">
    <property type="hits" value="18 hits in 1158 CRISPR screens"/>
</dbReference>
<dbReference type="ChiTaRS" id="ITFG1">
    <property type="organism name" value="human"/>
</dbReference>
<dbReference type="GenomeRNAi" id="81533"/>
<dbReference type="Pharos" id="Q8TB96">
    <property type="development level" value="Tbio"/>
</dbReference>
<dbReference type="PRO" id="PR:Q8TB96"/>
<dbReference type="Proteomes" id="UP000005640">
    <property type="component" value="Chromosome 16"/>
</dbReference>
<dbReference type="RNAct" id="Q8TB96">
    <property type="molecule type" value="protein"/>
</dbReference>
<dbReference type="Bgee" id="ENSG00000129636">
    <property type="expression patterns" value="Expressed in adrenal tissue and 197 other cell types or tissues"/>
</dbReference>
<dbReference type="ExpressionAtlas" id="Q8TB96">
    <property type="expression patterns" value="baseline and differential"/>
</dbReference>
<dbReference type="GO" id="GO:0070062">
    <property type="term" value="C:extracellular exosome"/>
    <property type="evidence" value="ECO:0007005"/>
    <property type="project" value="UniProtKB"/>
</dbReference>
<dbReference type="GO" id="GO:0005886">
    <property type="term" value="C:plasma membrane"/>
    <property type="evidence" value="ECO:0000318"/>
    <property type="project" value="GO_Central"/>
</dbReference>
<dbReference type="FunFam" id="2.130.10.130:FF:000014">
    <property type="entry name" value="Integrin alpha FG-GAP repeat containing 1"/>
    <property type="match status" value="1"/>
</dbReference>
<dbReference type="Gene3D" id="2.130.10.130">
    <property type="entry name" value="Integrin alpha, N-terminal"/>
    <property type="match status" value="1"/>
</dbReference>
<dbReference type="InterPro" id="IPR013517">
    <property type="entry name" value="FG-GAP"/>
</dbReference>
<dbReference type="InterPro" id="IPR028994">
    <property type="entry name" value="Integrin_alpha_N"/>
</dbReference>
<dbReference type="InterPro" id="IPR024881">
    <property type="entry name" value="Tip"/>
</dbReference>
<dbReference type="PANTHER" id="PTHR13412:SF0">
    <property type="entry name" value="T-CELL IMMUNOMODULATORY PROTEIN"/>
    <property type="match status" value="1"/>
</dbReference>
<dbReference type="PANTHER" id="PTHR13412">
    <property type="entry name" value="T-CELL IMMUNOMODULATORY PROTEIN HOMOLOG"/>
    <property type="match status" value="1"/>
</dbReference>
<dbReference type="Pfam" id="PF23122">
    <property type="entry name" value="C2_ITFG1"/>
    <property type="match status" value="1"/>
</dbReference>
<dbReference type="Pfam" id="PF13517">
    <property type="entry name" value="FG-GAP_3"/>
    <property type="match status" value="1"/>
</dbReference>
<dbReference type="SUPFAM" id="SSF69318">
    <property type="entry name" value="Integrin alpha N-terminal domain"/>
    <property type="match status" value="1"/>
</dbReference>
<proteinExistence type="evidence at protein level"/>
<keyword id="KW-0325">Glycoprotein</keyword>
<keyword id="KW-0472">Membrane</keyword>
<keyword id="KW-1267">Proteomics identification</keyword>
<keyword id="KW-1185">Reference proteome</keyword>
<keyword id="KW-0964">Secreted</keyword>
<keyword id="KW-0732">Signal</keyword>
<keyword id="KW-0812">Transmembrane</keyword>
<keyword id="KW-1133">Transmembrane helix</keyword>
<protein>
    <recommendedName>
        <fullName>T-cell immunomodulatory protein</fullName>
        <shortName>Protein TIP</shortName>
    </recommendedName>
    <alternativeName>
        <fullName>Integrin-alpha FG-GAP repeat-containing protein 1</fullName>
    </alternativeName>
    <alternativeName>
        <fullName evidence="5">Linkin</fullName>
    </alternativeName>
</protein>
<feature type="signal peptide" evidence="2">
    <location>
        <begin position="1"/>
        <end position="33"/>
    </location>
</feature>
<feature type="chain" id="PRO_0000034354" description="T-cell immunomodulatory protein">
    <location>
        <begin position="34"/>
        <end position="612"/>
    </location>
</feature>
<feature type="transmembrane region" description="Helical" evidence="2">
    <location>
        <begin position="567"/>
        <end position="587"/>
    </location>
</feature>
<feature type="repeat" description="FG-GAP; atypical">
    <location>
        <begin position="258"/>
        <end position="293"/>
    </location>
</feature>
<feature type="glycosylation site" description="N-linked (GlcNAc...) asparagine" evidence="2">
    <location>
        <position position="36"/>
    </location>
</feature>
<feature type="glycosylation site" description="N-linked (GlcNAc...) asparagine" evidence="2">
    <location>
        <position position="95"/>
    </location>
</feature>
<feature type="glycosylation site" description="N-linked (GlcNAc...) asparagine" evidence="2">
    <location>
        <position position="139"/>
    </location>
</feature>
<feature type="glycosylation site" description="N-linked (GlcNAc...) asparagine" evidence="2">
    <location>
        <position position="146"/>
    </location>
</feature>
<feature type="glycosylation site" description="N-linked (GlcNAc...) asparagine" evidence="2">
    <location>
        <position position="151"/>
    </location>
</feature>
<feature type="glycosylation site" description="N-linked (GlcNAc...) asparagine" evidence="2">
    <location>
        <position position="176"/>
    </location>
</feature>
<feature type="glycosylation site" description="N-linked (GlcNAc...) asparagine" evidence="3">
    <location>
        <position position="188"/>
    </location>
</feature>
<feature type="glycosylation site" description="N-linked (GlcNAc...) asparagine" evidence="2">
    <location>
        <position position="226"/>
    </location>
</feature>
<feature type="glycosylation site" description="N-linked (GlcNAc...) asparagine" evidence="2">
    <location>
        <position position="243"/>
    </location>
</feature>
<feature type="glycosylation site" description="N-linked (GlcNAc...) asparagine" evidence="2">
    <location>
        <position position="353"/>
    </location>
</feature>
<feature type="glycosylation site" description="N-linked (GlcNAc...) asparagine" evidence="2">
    <location>
        <position position="371"/>
    </location>
</feature>
<feature type="glycosylation site" description="N-linked (GlcNAc...) asparagine" evidence="2">
    <location>
        <position position="482"/>
    </location>
</feature>
<evidence type="ECO:0000250" key="1"/>
<evidence type="ECO:0000255" key="2"/>
<evidence type="ECO:0000269" key="3">
    <source>
    </source>
</evidence>
<evidence type="ECO:0000269" key="4">
    <source>
    </source>
</evidence>
<evidence type="ECO:0000303" key="5">
    <source>
    </source>
</evidence>
<evidence type="ECO:0000305" key="6"/>
<evidence type="ECO:0000312" key="7">
    <source>
        <dbReference type="HGNC" id="HGNC:30697"/>
    </source>
</evidence>
<name>TIP_HUMAN</name>
<organism>
    <name type="scientific">Homo sapiens</name>
    <name type="common">Human</name>
    <dbReference type="NCBI Taxonomy" id="9606"/>
    <lineage>
        <taxon>Eukaryota</taxon>
        <taxon>Metazoa</taxon>
        <taxon>Chordata</taxon>
        <taxon>Craniata</taxon>
        <taxon>Vertebrata</taxon>
        <taxon>Euteleostomi</taxon>
        <taxon>Mammalia</taxon>
        <taxon>Eutheria</taxon>
        <taxon>Euarchontoglires</taxon>
        <taxon>Primates</taxon>
        <taxon>Haplorrhini</taxon>
        <taxon>Catarrhini</taxon>
        <taxon>Hominidae</taxon>
        <taxon>Homo</taxon>
    </lineage>
</organism>
<accession>Q8TB96</accession>
<accession>Q96SR4</accession>
<accession>Q9BRE2</accession>
<accession>Q9H2V9</accession>